<gene>
    <name type="primary">RPA3B</name>
    <name type="synonym">RFA3B</name>
    <name type="synonym">RPA14B</name>
    <name type="ordered locus">At4g18590</name>
    <name type="ORF">F28J12.250</name>
</gene>
<evidence type="ECO:0000250" key="1"/>
<evidence type="ECO:0000305" key="2"/>
<evidence type="ECO:0007744" key="3">
    <source>
    </source>
</evidence>
<accession>Q6NLG7</accession>
<accession>O49527</accession>
<protein>
    <recommendedName>
        <fullName>Replication protein A 14 kDa subunit B</fullName>
        <shortName>AtRPA14B</shortName>
    </recommendedName>
    <alternativeName>
        <fullName>Replication factor A protein 3B</fullName>
    </alternativeName>
    <alternativeName>
        <fullName>Replication protein A 3B</fullName>
    </alternativeName>
</protein>
<organism>
    <name type="scientific">Arabidopsis thaliana</name>
    <name type="common">Mouse-ear cress</name>
    <dbReference type="NCBI Taxonomy" id="3702"/>
    <lineage>
        <taxon>Eukaryota</taxon>
        <taxon>Viridiplantae</taxon>
        <taxon>Streptophyta</taxon>
        <taxon>Embryophyta</taxon>
        <taxon>Tracheophyta</taxon>
        <taxon>Spermatophyta</taxon>
        <taxon>Magnoliopsida</taxon>
        <taxon>eudicotyledons</taxon>
        <taxon>Gunneridae</taxon>
        <taxon>Pentapetalae</taxon>
        <taxon>rosids</taxon>
        <taxon>malvids</taxon>
        <taxon>Brassicales</taxon>
        <taxon>Brassicaceae</taxon>
        <taxon>Camelineae</taxon>
        <taxon>Arabidopsis</taxon>
    </lineage>
</organism>
<proteinExistence type="evidence at protein level"/>
<sequence>MDTSSPAAFVNGALLRRYIGQKVRAVIQVIRSDVGSVIGKSTDDQQIVVKGSPQPPLTTYLEVIGIAETDNTIRAEVWTNFGDSFDVQNYNELCKLANGEFRHLFI</sequence>
<name>RFA3B_ARATH</name>
<keyword id="KW-0007">Acetylation</keyword>
<keyword id="KW-0227">DNA damage</keyword>
<keyword id="KW-0233">DNA recombination</keyword>
<keyword id="KW-0234">DNA repair</keyword>
<keyword id="KW-0235">DNA replication</keyword>
<keyword id="KW-0238">DNA-binding</keyword>
<keyword id="KW-0539">Nucleus</keyword>
<keyword id="KW-1185">Reference proteome</keyword>
<reference key="1">
    <citation type="journal article" date="1999" name="Nature">
        <title>Sequence and analysis of chromosome 4 of the plant Arabidopsis thaliana.</title>
        <authorList>
            <person name="Mayer K.F.X."/>
            <person name="Schueller C."/>
            <person name="Wambutt R."/>
            <person name="Murphy G."/>
            <person name="Volckaert G."/>
            <person name="Pohl T."/>
            <person name="Duesterhoeft A."/>
            <person name="Stiekema W."/>
            <person name="Entian K.-D."/>
            <person name="Terryn N."/>
            <person name="Harris B."/>
            <person name="Ansorge W."/>
            <person name="Brandt P."/>
            <person name="Grivell L.A."/>
            <person name="Rieger M."/>
            <person name="Weichselgartner M."/>
            <person name="de Simone V."/>
            <person name="Obermaier B."/>
            <person name="Mache R."/>
            <person name="Mueller M."/>
            <person name="Kreis M."/>
            <person name="Delseny M."/>
            <person name="Puigdomenech P."/>
            <person name="Watson M."/>
            <person name="Schmidtheini T."/>
            <person name="Reichert B."/>
            <person name="Portetelle D."/>
            <person name="Perez-Alonso M."/>
            <person name="Boutry M."/>
            <person name="Bancroft I."/>
            <person name="Vos P."/>
            <person name="Hoheisel J."/>
            <person name="Zimmermann W."/>
            <person name="Wedler H."/>
            <person name="Ridley P."/>
            <person name="Langham S.-A."/>
            <person name="McCullagh B."/>
            <person name="Bilham L."/>
            <person name="Robben J."/>
            <person name="van der Schueren J."/>
            <person name="Grymonprez B."/>
            <person name="Chuang Y.-J."/>
            <person name="Vandenbussche F."/>
            <person name="Braeken M."/>
            <person name="Weltjens I."/>
            <person name="Voet M."/>
            <person name="Bastiaens I."/>
            <person name="Aert R."/>
            <person name="Defoor E."/>
            <person name="Weitzenegger T."/>
            <person name="Bothe G."/>
            <person name="Ramsperger U."/>
            <person name="Hilbert H."/>
            <person name="Braun M."/>
            <person name="Holzer E."/>
            <person name="Brandt A."/>
            <person name="Peters S."/>
            <person name="van Staveren M."/>
            <person name="Dirkse W."/>
            <person name="Mooijman P."/>
            <person name="Klein Lankhorst R."/>
            <person name="Rose M."/>
            <person name="Hauf J."/>
            <person name="Koetter P."/>
            <person name="Berneiser S."/>
            <person name="Hempel S."/>
            <person name="Feldpausch M."/>
            <person name="Lamberth S."/>
            <person name="Van den Daele H."/>
            <person name="De Keyser A."/>
            <person name="Buysshaert C."/>
            <person name="Gielen J."/>
            <person name="Villarroel R."/>
            <person name="De Clercq R."/>
            <person name="van Montagu M."/>
            <person name="Rogers J."/>
            <person name="Cronin A."/>
            <person name="Quail M.A."/>
            <person name="Bray-Allen S."/>
            <person name="Clark L."/>
            <person name="Doggett J."/>
            <person name="Hall S."/>
            <person name="Kay M."/>
            <person name="Lennard N."/>
            <person name="McLay K."/>
            <person name="Mayes R."/>
            <person name="Pettett A."/>
            <person name="Rajandream M.A."/>
            <person name="Lyne M."/>
            <person name="Benes V."/>
            <person name="Rechmann S."/>
            <person name="Borkova D."/>
            <person name="Bloecker H."/>
            <person name="Scharfe M."/>
            <person name="Grimm M."/>
            <person name="Loehnert T.-H."/>
            <person name="Dose S."/>
            <person name="de Haan M."/>
            <person name="Maarse A.C."/>
            <person name="Schaefer M."/>
            <person name="Mueller-Auer S."/>
            <person name="Gabel C."/>
            <person name="Fuchs M."/>
            <person name="Fartmann B."/>
            <person name="Granderath K."/>
            <person name="Dauner D."/>
            <person name="Herzl A."/>
            <person name="Neumann S."/>
            <person name="Argiriou A."/>
            <person name="Vitale D."/>
            <person name="Liguori R."/>
            <person name="Piravandi E."/>
            <person name="Massenet O."/>
            <person name="Quigley F."/>
            <person name="Clabauld G."/>
            <person name="Muendlein A."/>
            <person name="Felber R."/>
            <person name="Schnabl S."/>
            <person name="Hiller R."/>
            <person name="Schmidt W."/>
            <person name="Lecharny A."/>
            <person name="Aubourg S."/>
            <person name="Chefdor F."/>
            <person name="Cooke R."/>
            <person name="Berger C."/>
            <person name="Monfort A."/>
            <person name="Casacuberta E."/>
            <person name="Gibbons T."/>
            <person name="Weber N."/>
            <person name="Vandenbol M."/>
            <person name="Bargues M."/>
            <person name="Terol J."/>
            <person name="Torres A."/>
            <person name="Perez-Perez A."/>
            <person name="Purnelle B."/>
            <person name="Bent E."/>
            <person name="Johnson S."/>
            <person name="Tacon D."/>
            <person name="Jesse T."/>
            <person name="Heijnen L."/>
            <person name="Schwarz S."/>
            <person name="Scholler P."/>
            <person name="Heber S."/>
            <person name="Francs P."/>
            <person name="Bielke C."/>
            <person name="Frishman D."/>
            <person name="Haase D."/>
            <person name="Lemcke K."/>
            <person name="Mewes H.-W."/>
            <person name="Stocker S."/>
            <person name="Zaccaria P."/>
            <person name="Bevan M."/>
            <person name="Wilson R.K."/>
            <person name="de la Bastide M."/>
            <person name="Habermann K."/>
            <person name="Parnell L."/>
            <person name="Dedhia N."/>
            <person name="Gnoj L."/>
            <person name="Schutz K."/>
            <person name="Huang E."/>
            <person name="Spiegel L."/>
            <person name="Sekhon M."/>
            <person name="Murray J."/>
            <person name="Sheet P."/>
            <person name="Cordes M."/>
            <person name="Abu-Threideh J."/>
            <person name="Stoneking T."/>
            <person name="Kalicki J."/>
            <person name="Graves T."/>
            <person name="Harmon G."/>
            <person name="Edwards J."/>
            <person name="Latreille P."/>
            <person name="Courtney L."/>
            <person name="Cloud J."/>
            <person name="Abbott A."/>
            <person name="Scott K."/>
            <person name="Johnson D."/>
            <person name="Minx P."/>
            <person name="Bentley D."/>
            <person name="Fulton B."/>
            <person name="Miller N."/>
            <person name="Greco T."/>
            <person name="Kemp K."/>
            <person name="Kramer J."/>
            <person name="Fulton L."/>
            <person name="Mardis E."/>
            <person name="Dante M."/>
            <person name="Pepin K."/>
            <person name="Hillier L.W."/>
            <person name="Nelson J."/>
            <person name="Spieth J."/>
            <person name="Ryan E."/>
            <person name="Andrews S."/>
            <person name="Geisel C."/>
            <person name="Layman D."/>
            <person name="Du H."/>
            <person name="Ali J."/>
            <person name="Berghoff A."/>
            <person name="Jones K."/>
            <person name="Drone K."/>
            <person name="Cotton M."/>
            <person name="Joshu C."/>
            <person name="Antonoiu B."/>
            <person name="Zidanic M."/>
            <person name="Strong C."/>
            <person name="Sun H."/>
            <person name="Lamar B."/>
            <person name="Yordan C."/>
            <person name="Ma P."/>
            <person name="Zhong J."/>
            <person name="Preston R."/>
            <person name="Vil D."/>
            <person name="Shekher M."/>
            <person name="Matero A."/>
            <person name="Shah R."/>
            <person name="Swaby I.K."/>
            <person name="O'Shaughnessy A."/>
            <person name="Rodriguez M."/>
            <person name="Hoffman J."/>
            <person name="Till S."/>
            <person name="Granat S."/>
            <person name="Shohdy N."/>
            <person name="Hasegawa A."/>
            <person name="Hameed A."/>
            <person name="Lodhi M."/>
            <person name="Johnson A."/>
            <person name="Chen E."/>
            <person name="Marra M.A."/>
            <person name="Martienssen R."/>
            <person name="McCombie W.R."/>
        </authorList>
    </citation>
    <scope>NUCLEOTIDE SEQUENCE [LARGE SCALE GENOMIC DNA]</scope>
    <source>
        <strain>cv. Columbia</strain>
    </source>
</reference>
<reference key="2">
    <citation type="journal article" date="2017" name="Plant J.">
        <title>Araport11: a complete reannotation of the Arabidopsis thaliana reference genome.</title>
        <authorList>
            <person name="Cheng C.Y."/>
            <person name="Krishnakumar V."/>
            <person name="Chan A.P."/>
            <person name="Thibaud-Nissen F."/>
            <person name="Schobel S."/>
            <person name="Town C.D."/>
        </authorList>
    </citation>
    <scope>GENOME REANNOTATION</scope>
    <source>
        <strain>cv. Columbia</strain>
    </source>
</reference>
<reference key="3">
    <citation type="submission" date="2004-04" db="EMBL/GenBank/DDBJ databases">
        <title>Arabidopsis ORF clones.</title>
        <authorList>
            <person name="Shinn P."/>
            <person name="Chen H."/>
            <person name="Cheuk R.F."/>
            <person name="Kim C.J."/>
            <person name="Ecker J.R."/>
        </authorList>
    </citation>
    <scope>NUCLEOTIDE SEQUENCE [LARGE SCALE MRNA]</scope>
    <source>
        <strain>cv. Columbia</strain>
    </source>
</reference>
<reference key="4">
    <citation type="journal article" date="2012" name="Mol. Cell. Proteomics">
        <title>Comparative large-scale characterisation of plant vs. mammal proteins reveals similar and idiosyncratic N-alpha acetylation features.</title>
        <authorList>
            <person name="Bienvenut W.V."/>
            <person name="Sumpton D."/>
            <person name="Martinez A."/>
            <person name="Lilla S."/>
            <person name="Espagne C."/>
            <person name="Meinnel T."/>
            <person name="Giglione C."/>
        </authorList>
    </citation>
    <scope>ACETYLATION [LARGE SCALE ANALYSIS] AT MET-1</scope>
    <scope>IDENTIFICATION BY MASS SPECTROMETRY [LARGE SCALE ANALYSIS]</scope>
</reference>
<feature type="chain" id="PRO_0000422627" description="Replication protein A 14 kDa subunit B">
    <location>
        <begin position="1"/>
        <end position="106"/>
    </location>
</feature>
<feature type="modified residue" description="N-acetylmethionine" evidence="3">
    <location>
        <position position="1"/>
    </location>
</feature>
<dbReference type="EMBL" id="AL021710">
    <property type="protein sequence ID" value="CAA16739.1"/>
    <property type="status" value="ALT_SEQ"/>
    <property type="molecule type" value="Genomic_DNA"/>
</dbReference>
<dbReference type="EMBL" id="AL161549">
    <property type="protein sequence ID" value="CAB78861.1"/>
    <property type="status" value="ALT_SEQ"/>
    <property type="molecule type" value="Genomic_DNA"/>
</dbReference>
<dbReference type="EMBL" id="CP002687">
    <property type="protein sequence ID" value="AEE84064.1"/>
    <property type="molecule type" value="Genomic_DNA"/>
</dbReference>
<dbReference type="EMBL" id="BT012205">
    <property type="protein sequence ID" value="AAS76692.1"/>
    <property type="molecule type" value="mRNA"/>
</dbReference>
<dbReference type="EMBL" id="BT012366">
    <property type="protein sequence ID" value="AAS88756.1"/>
    <property type="molecule type" value="mRNA"/>
</dbReference>
<dbReference type="PIR" id="T04555">
    <property type="entry name" value="T04555"/>
</dbReference>
<dbReference type="RefSeq" id="NP_567560.2">
    <property type="nucleotide sequence ID" value="NM_117973.5"/>
</dbReference>
<dbReference type="SMR" id="Q6NLG7"/>
<dbReference type="BioGRID" id="12884">
    <property type="interactions" value="1"/>
</dbReference>
<dbReference type="FunCoup" id="Q6NLG7">
    <property type="interactions" value="205"/>
</dbReference>
<dbReference type="STRING" id="3702.Q6NLG7"/>
<dbReference type="iPTMnet" id="Q6NLG7"/>
<dbReference type="PaxDb" id="3702-AT4G18590.1"/>
<dbReference type="ProteomicsDB" id="236921"/>
<dbReference type="DNASU" id="827591"/>
<dbReference type="EnsemblPlants" id="AT4G18590.1">
    <property type="protein sequence ID" value="AT4G18590.1"/>
    <property type="gene ID" value="AT4G18590"/>
</dbReference>
<dbReference type="GeneID" id="827591"/>
<dbReference type="Gramene" id="AT4G18590.1">
    <property type="protein sequence ID" value="AT4G18590.1"/>
    <property type="gene ID" value="AT4G18590"/>
</dbReference>
<dbReference type="KEGG" id="ath:AT4G18590"/>
<dbReference type="Araport" id="AT4G18590"/>
<dbReference type="TAIR" id="AT4G18590">
    <property type="gene designation" value="RPA3B"/>
</dbReference>
<dbReference type="eggNOG" id="ENOG502S57Y">
    <property type="taxonomic scope" value="Eukaryota"/>
</dbReference>
<dbReference type="HOGENOM" id="CLU_141922_3_0_1"/>
<dbReference type="InParanoid" id="Q6NLG7"/>
<dbReference type="OMA" id="IRAEVWT"/>
<dbReference type="OrthoDB" id="188186at2759"/>
<dbReference type="PhylomeDB" id="Q6NLG7"/>
<dbReference type="PRO" id="PR:Q6NLG7"/>
<dbReference type="Proteomes" id="UP000006548">
    <property type="component" value="Chromosome 4"/>
</dbReference>
<dbReference type="ExpressionAtlas" id="Q6NLG7">
    <property type="expression patterns" value="baseline and differential"/>
</dbReference>
<dbReference type="GO" id="GO:0031981">
    <property type="term" value="C:nuclear lumen"/>
    <property type="evidence" value="ECO:0007669"/>
    <property type="project" value="UniProtKB-ARBA"/>
</dbReference>
<dbReference type="GO" id="GO:0003677">
    <property type="term" value="F:DNA binding"/>
    <property type="evidence" value="ECO:0007669"/>
    <property type="project" value="UniProtKB-KW"/>
</dbReference>
<dbReference type="GO" id="GO:0006310">
    <property type="term" value="P:DNA recombination"/>
    <property type="evidence" value="ECO:0007669"/>
    <property type="project" value="UniProtKB-KW"/>
</dbReference>
<dbReference type="GO" id="GO:0006281">
    <property type="term" value="P:DNA repair"/>
    <property type="evidence" value="ECO:0007669"/>
    <property type="project" value="UniProtKB-KW"/>
</dbReference>
<dbReference type="GO" id="GO:0006260">
    <property type="term" value="P:DNA replication"/>
    <property type="evidence" value="ECO:0007669"/>
    <property type="project" value="UniProtKB-KW"/>
</dbReference>
<dbReference type="CDD" id="cd04479">
    <property type="entry name" value="RPA3"/>
    <property type="match status" value="1"/>
</dbReference>
<dbReference type="Gene3D" id="2.40.50.140">
    <property type="entry name" value="Nucleic acid-binding proteins"/>
    <property type="match status" value="1"/>
</dbReference>
<dbReference type="InterPro" id="IPR012340">
    <property type="entry name" value="NA-bd_OB-fold"/>
</dbReference>
<dbReference type="InterPro" id="IPR013970">
    <property type="entry name" value="Rfa2"/>
</dbReference>
<dbReference type="PANTHER" id="PTHR47058">
    <property type="entry name" value="REPLICATION PROTEIN A 14 KDA SUBUNIT A-RELATED"/>
    <property type="match status" value="1"/>
</dbReference>
<dbReference type="PANTHER" id="PTHR47058:SF3">
    <property type="entry name" value="REPLICATION PROTEIN A 14 KDA SUBUNIT A-RELATED"/>
    <property type="match status" value="1"/>
</dbReference>
<dbReference type="Pfam" id="PF08661">
    <property type="entry name" value="Rep_fac-A_3"/>
    <property type="match status" value="1"/>
</dbReference>
<dbReference type="SUPFAM" id="SSF50249">
    <property type="entry name" value="Nucleic acid-binding proteins"/>
    <property type="match status" value="1"/>
</dbReference>
<comment type="function">
    <text evidence="1">As part of the replication protein A (RPA/RP-A), a single-stranded DNA-binding heterotrimeric complex, may play an essential role in DNA replication, recombination and repair. Binds and stabilizes single-stranded DNA intermediates, preventing complementary DNA reannealing and recruiting different proteins involved in DNA metabolism (By similarity).</text>
</comment>
<comment type="subunit">
    <text evidence="1">Component of the heterotrimeric canonical replication protein A complex (RPA).</text>
</comment>
<comment type="subcellular location">
    <subcellularLocation>
        <location evidence="1">Nucleus</location>
    </subcellularLocation>
</comment>
<comment type="similarity">
    <text evidence="2">Belongs to the replication factor A protein 3 family.</text>
</comment>
<comment type="sequence caution" evidence="2">
    <conflict type="erroneous gene model prediction">
        <sequence resource="EMBL-CDS" id="CAA16739"/>
    </conflict>
    <text>The predicted gene At4g18590 has been split into 3 genes: At4g18590, At4g18593 and At4g18596.</text>
</comment>
<comment type="sequence caution" evidence="2">
    <conflict type="erroneous gene model prediction">
        <sequence resource="EMBL-CDS" id="CAB78861"/>
    </conflict>
    <text>The predicted gene At4g18590 has been split into 3 genes: At4g18590, At4g18593 and At4g18596.</text>
</comment>